<keyword id="KW-0963">Cytoplasm</keyword>
<keyword id="KW-0274">FAD</keyword>
<keyword id="KW-0285">Flavoprotein</keyword>
<keyword id="KW-0520">NAD</keyword>
<keyword id="KW-0819">tRNA processing</keyword>
<organism>
    <name type="scientific">Legionella pneumophila (strain Paris)</name>
    <dbReference type="NCBI Taxonomy" id="297246"/>
    <lineage>
        <taxon>Bacteria</taxon>
        <taxon>Pseudomonadati</taxon>
        <taxon>Pseudomonadota</taxon>
        <taxon>Gammaproteobacteria</taxon>
        <taxon>Legionellales</taxon>
        <taxon>Legionellaceae</taxon>
        <taxon>Legionella</taxon>
    </lineage>
</organism>
<gene>
    <name evidence="1" type="primary">mnmG</name>
    <name evidence="1" type="synonym">gidA</name>
    <name type="ordered locus">lpp2948</name>
</gene>
<proteinExistence type="inferred from homology"/>
<comment type="function">
    <text evidence="1">NAD-binding protein involved in the addition of a carboxymethylaminomethyl (cmnm) group at the wobble position (U34) of certain tRNAs, forming tRNA-cmnm(5)s(2)U34.</text>
</comment>
<comment type="cofactor">
    <cofactor evidence="1">
        <name>FAD</name>
        <dbReference type="ChEBI" id="CHEBI:57692"/>
    </cofactor>
</comment>
<comment type="subunit">
    <text evidence="1">Homodimer. Heterotetramer of two MnmE and two MnmG subunits.</text>
</comment>
<comment type="subcellular location">
    <subcellularLocation>
        <location evidence="1">Cytoplasm</location>
    </subcellularLocation>
</comment>
<comment type="similarity">
    <text evidence="1">Belongs to the MnmG family.</text>
</comment>
<feature type="chain" id="PRO_0000117121" description="tRNA uridine 5-carboxymethylaminomethyl modification enzyme MnmG">
    <location>
        <begin position="1"/>
        <end position="624"/>
    </location>
</feature>
<feature type="binding site" evidence="1">
    <location>
        <begin position="13"/>
        <end position="18"/>
    </location>
    <ligand>
        <name>FAD</name>
        <dbReference type="ChEBI" id="CHEBI:57692"/>
    </ligand>
</feature>
<feature type="binding site" evidence="1">
    <location>
        <position position="125"/>
    </location>
    <ligand>
        <name>FAD</name>
        <dbReference type="ChEBI" id="CHEBI:57692"/>
    </ligand>
</feature>
<feature type="binding site" evidence="1">
    <location>
        <position position="180"/>
    </location>
    <ligand>
        <name>FAD</name>
        <dbReference type="ChEBI" id="CHEBI:57692"/>
    </ligand>
</feature>
<feature type="binding site" evidence="1">
    <location>
        <begin position="273"/>
        <end position="287"/>
    </location>
    <ligand>
        <name>NAD(+)</name>
        <dbReference type="ChEBI" id="CHEBI:57540"/>
    </ligand>
</feature>
<feature type="binding site" evidence="1">
    <location>
        <position position="370"/>
    </location>
    <ligand>
        <name>FAD</name>
        <dbReference type="ChEBI" id="CHEBI:57692"/>
    </ligand>
</feature>
<evidence type="ECO:0000255" key="1">
    <source>
        <dbReference type="HAMAP-Rule" id="MF_00129"/>
    </source>
</evidence>
<reference key="1">
    <citation type="journal article" date="2004" name="Nat. Genet.">
        <title>Evidence in the Legionella pneumophila genome for exploitation of host cell functions and high genome plasticity.</title>
        <authorList>
            <person name="Cazalet C."/>
            <person name="Rusniok C."/>
            <person name="Brueggemann H."/>
            <person name="Zidane N."/>
            <person name="Magnier A."/>
            <person name="Ma L."/>
            <person name="Tichit M."/>
            <person name="Jarraud S."/>
            <person name="Bouchier C."/>
            <person name="Vandenesch F."/>
            <person name="Kunst F."/>
            <person name="Etienne J."/>
            <person name="Glaser P."/>
            <person name="Buchrieser C."/>
        </authorList>
    </citation>
    <scope>NUCLEOTIDE SEQUENCE [LARGE SCALE GENOMIC DNA]</scope>
    <source>
        <strain>Paris</strain>
    </source>
</reference>
<sequence length="624" mass="69067">MNLEQLYDVIVVGGGHAGTEAALAAARLGVKTLLLTHNIDLLGQMSCNPAIGGIGKGHLVKEIDALDGAMAKAADQAGIQFRILNASKGPAVRATRAQADRVLYRKAIRTQLQSQANLTIFQQAVDDLKIEGGLVTGVVTQMGLTLKARAVVLTVGTFLGGKIHVGMNQYAGGRAGDPPSIALSKSLRDLDLPVGRLKTGTPPRIDRRTIDFSQMVEQPGDTPVPVFSYLGTASDHPQQVPCHITHTTEATHDIIRNNLDKSPMYAGVIEGVGPRYCPSIEDKIVRFADKTSHQIFVEPEGLTTEEIYPNGISTSLPFEVQVQFVRTIKGFENAHITRPGYAIEYDYFDPRGLTSFLQTKAIPNLFFAGQINGTTGYEEAAAQGIIAGMNAALQIKDQELWCPRRDEAYIGVLIDDLITCGTQEPYRMFTSRAEYRLLLREDNADLRLTEKGRQLGLVGDERWESFSKKREAIESTQALLHNSWVRVHHNDLFKEALLNPMQHDCRAAEFLKRPEINYQHLLMMDDLNLPELPQEITEQIEIQNKYAGYIDRQQQEIEKLRKHENTMLPETLDYNDVVGLSSEVIQKLNRIKPTSLAQAGRISGVTPAALSLLLVHLKKSRLPV</sequence>
<dbReference type="EMBL" id="CR628336">
    <property type="protein sequence ID" value="CAH14101.1"/>
    <property type="molecule type" value="Genomic_DNA"/>
</dbReference>
<dbReference type="RefSeq" id="WP_015961884.1">
    <property type="nucleotide sequence ID" value="NC_006368.1"/>
</dbReference>
<dbReference type="SMR" id="Q5X0Z8"/>
<dbReference type="KEGG" id="lpp:lpp2948"/>
<dbReference type="LegioList" id="lpp2948"/>
<dbReference type="HOGENOM" id="CLU_007831_2_2_6"/>
<dbReference type="GO" id="GO:0005829">
    <property type="term" value="C:cytosol"/>
    <property type="evidence" value="ECO:0007669"/>
    <property type="project" value="TreeGrafter"/>
</dbReference>
<dbReference type="GO" id="GO:0050660">
    <property type="term" value="F:flavin adenine dinucleotide binding"/>
    <property type="evidence" value="ECO:0007669"/>
    <property type="project" value="UniProtKB-UniRule"/>
</dbReference>
<dbReference type="GO" id="GO:0030488">
    <property type="term" value="P:tRNA methylation"/>
    <property type="evidence" value="ECO:0007669"/>
    <property type="project" value="TreeGrafter"/>
</dbReference>
<dbReference type="GO" id="GO:0002098">
    <property type="term" value="P:tRNA wobble uridine modification"/>
    <property type="evidence" value="ECO:0007669"/>
    <property type="project" value="InterPro"/>
</dbReference>
<dbReference type="FunFam" id="1.10.150.570:FF:000001">
    <property type="entry name" value="tRNA uridine 5-carboxymethylaminomethyl modification enzyme MnmG"/>
    <property type="match status" value="1"/>
</dbReference>
<dbReference type="FunFam" id="3.50.50.60:FF:000002">
    <property type="entry name" value="tRNA uridine 5-carboxymethylaminomethyl modification enzyme MnmG"/>
    <property type="match status" value="1"/>
</dbReference>
<dbReference type="FunFam" id="3.50.50.60:FF:000010">
    <property type="entry name" value="tRNA uridine 5-carboxymethylaminomethyl modification enzyme MnmG"/>
    <property type="match status" value="1"/>
</dbReference>
<dbReference type="Gene3D" id="3.50.50.60">
    <property type="entry name" value="FAD/NAD(P)-binding domain"/>
    <property type="match status" value="2"/>
</dbReference>
<dbReference type="Gene3D" id="1.10.150.570">
    <property type="entry name" value="GidA associated domain, C-terminal subdomain"/>
    <property type="match status" value="1"/>
</dbReference>
<dbReference type="Gene3D" id="1.10.10.1800">
    <property type="entry name" value="tRNA uridine 5-carboxymethylaminomethyl modification enzyme MnmG/GidA"/>
    <property type="match status" value="1"/>
</dbReference>
<dbReference type="HAMAP" id="MF_00129">
    <property type="entry name" value="MnmG_GidA"/>
    <property type="match status" value="1"/>
</dbReference>
<dbReference type="InterPro" id="IPR036188">
    <property type="entry name" value="FAD/NAD-bd_sf"/>
</dbReference>
<dbReference type="InterPro" id="IPR049312">
    <property type="entry name" value="GIDA_C_N"/>
</dbReference>
<dbReference type="InterPro" id="IPR004416">
    <property type="entry name" value="MnmG"/>
</dbReference>
<dbReference type="InterPro" id="IPR002218">
    <property type="entry name" value="MnmG-rel"/>
</dbReference>
<dbReference type="InterPro" id="IPR020595">
    <property type="entry name" value="MnmG-rel_CS"/>
</dbReference>
<dbReference type="InterPro" id="IPR026904">
    <property type="entry name" value="MnmG_C"/>
</dbReference>
<dbReference type="InterPro" id="IPR047001">
    <property type="entry name" value="MnmG_C_subdom"/>
</dbReference>
<dbReference type="InterPro" id="IPR044920">
    <property type="entry name" value="MnmG_C_subdom_sf"/>
</dbReference>
<dbReference type="InterPro" id="IPR040131">
    <property type="entry name" value="MnmG_N"/>
</dbReference>
<dbReference type="NCBIfam" id="TIGR00136">
    <property type="entry name" value="mnmG_gidA"/>
    <property type="match status" value="1"/>
</dbReference>
<dbReference type="PANTHER" id="PTHR11806">
    <property type="entry name" value="GLUCOSE INHIBITED DIVISION PROTEIN A"/>
    <property type="match status" value="1"/>
</dbReference>
<dbReference type="PANTHER" id="PTHR11806:SF0">
    <property type="entry name" value="PROTEIN MTO1 HOMOLOG, MITOCHONDRIAL"/>
    <property type="match status" value="1"/>
</dbReference>
<dbReference type="Pfam" id="PF01134">
    <property type="entry name" value="GIDA"/>
    <property type="match status" value="1"/>
</dbReference>
<dbReference type="Pfam" id="PF21680">
    <property type="entry name" value="GIDA_C_1st"/>
    <property type="match status" value="1"/>
</dbReference>
<dbReference type="Pfam" id="PF13932">
    <property type="entry name" value="SAM_GIDA_C"/>
    <property type="match status" value="1"/>
</dbReference>
<dbReference type="PRINTS" id="PR00411">
    <property type="entry name" value="PNDRDTASEI"/>
</dbReference>
<dbReference type="SMART" id="SM01228">
    <property type="entry name" value="GIDA_assoc_3"/>
    <property type="match status" value="1"/>
</dbReference>
<dbReference type="SUPFAM" id="SSF51905">
    <property type="entry name" value="FAD/NAD(P)-binding domain"/>
    <property type="match status" value="1"/>
</dbReference>
<dbReference type="PROSITE" id="PS01280">
    <property type="entry name" value="GIDA_1"/>
    <property type="match status" value="1"/>
</dbReference>
<dbReference type="PROSITE" id="PS01281">
    <property type="entry name" value="GIDA_2"/>
    <property type="match status" value="1"/>
</dbReference>
<name>MNMG_LEGPA</name>
<accession>Q5X0Z8</accession>
<protein>
    <recommendedName>
        <fullName evidence="1">tRNA uridine 5-carboxymethylaminomethyl modification enzyme MnmG</fullName>
    </recommendedName>
    <alternativeName>
        <fullName evidence="1">Glucose-inhibited division protein A</fullName>
    </alternativeName>
</protein>